<comment type="function">
    <text evidence="1">Regulates expression of genes involved in acid-resistance and biofilm formation. May be a non-specific DNA-binding protein that binds genes and/or intergenic regions via a geometric recognition (By similarity).</text>
</comment>
<comment type="subunit">
    <text evidence="1">Homodimer.</text>
</comment>
<comment type="similarity">
    <text evidence="2">Belongs to the AriR family.</text>
</comment>
<dbReference type="EMBL" id="CP000802">
    <property type="protein sequence ID" value="ABV05601.1"/>
    <property type="molecule type" value="Genomic_DNA"/>
</dbReference>
<dbReference type="RefSeq" id="WP_000888772.1">
    <property type="nucleotide sequence ID" value="NC_009800.1"/>
</dbReference>
<dbReference type="SMR" id="A7ZZ97"/>
<dbReference type="GeneID" id="75203729"/>
<dbReference type="KEGG" id="ecx:EcHS_A1262"/>
<dbReference type="HOGENOM" id="CLU_164045_1_0_6"/>
<dbReference type="GO" id="GO:0003677">
    <property type="term" value="F:DNA binding"/>
    <property type="evidence" value="ECO:0007669"/>
    <property type="project" value="UniProtKB-KW"/>
</dbReference>
<dbReference type="GO" id="GO:0071468">
    <property type="term" value="P:cellular response to acidic pH"/>
    <property type="evidence" value="ECO:0007669"/>
    <property type="project" value="InterPro"/>
</dbReference>
<dbReference type="FunFam" id="1.20.5.5260:FF:000001">
    <property type="entry name" value="Two-component-system connector protein AriR"/>
    <property type="match status" value="1"/>
</dbReference>
<dbReference type="Gene3D" id="1.20.5.5260">
    <property type="match status" value="1"/>
</dbReference>
<dbReference type="InterPro" id="IPR024753">
    <property type="entry name" value="AriR"/>
</dbReference>
<dbReference type="Pfam" id="PF10798">
    <property type="entry name" value="YmgB"/>
    <property type="match status" value="1"/>
</dbReference>
<proteinExistence type="inferred from homology"/>
<reference key="1">
    <citation type="journal article" date="2008" name="J. Bacteriol.">
        <title>The pangenome structure of Escherichia coli: comparative genomic analysis of E. coli commensal and pathogenic isolates.</title>
        <authorList>
            <person name="Rasko D.A."/>
            <person name="Rosovitz M.J."/>
            <person name="Myers G.S.A."/>
            <person name="Mongodin E.F."/>
            <person name="Fricke W.F."/>
            <person name="Gajer P."/>
            <person name="Crabtree J."/>
            <person name="Sebaihia M."/>
            <person name="Thomson N.R."/>
            <person name="Chaudhuri R."/>
            <person name="Henderson I.R."/>
            <person name="Sperandio V."/>
            <person name="Ravel J."/>
        </authorList>
    </citation>
    <scope>NUCLEOTIDE SEQUENCE [LARGE SCALE GENOMIC DNA]</scope>
    <source>
        <strain>HS</strain>
    </source>
</reference>
<protein>
    <recommendedName>
        <fullName>Regulatory protein AriR</fullName>
    </recommendedName>
</protein>
<gene>
    <name type="primary">ariR</name>
    <name type="ordered locus">EcHS_A1262</name>
</gene>
<name>ARIR_ECOHS</name>
<keyword id="KW-0238">DNA-binding</keyword>
<accession>A7ZZ97</accession>
<evidence type="ECO:0000250" key="1"/>
<evidence type="ECO:0000305" key="2"/>
<organism>
    <name type="scientific">Escherichia coli O9:H4 (strain HS)</name>
    <dbReference type="NCBI Taxonomy" id="331112"/>
    <lineage>
        <taxon>Bacteria</taxon>
        <taxon>Pseudomonadati</taxon>
        <taxon>Pseudomonadota</taxon>
        <taxon>Gammaproteobacteria</taxon>
        <taxon>Enterobacterales</taxon>
        <taxon>Enterobacteriaceae</taxon>
        <taxon>Escherichia</taxon>
    </lineage>
</organism>
<sequence>MLEDTTIHNAITDKALASYFRSSGNLLEEESAVLGQAVTNLMLSGDNVNNKNIILSLIHSLETTSDILKADVIRKTLEIVLRYTADDM</sequence>
<feature type="chain" id="PRO_0000350562" description="Regulatory protein AriR">
    <location>
        <begin position="1"/>
        <end position="88"/>
    </location>
</feature>